<comment type="function">
    <text evidence="1">Bifunctional enzyme with both catalase and broad-spectrum peroxidase activity.</text>
</comment>
<comment type="catalytic activity">
    <reaction evidence="1">
        <text>H2O2 + AH2 = A + 2 H2O</text>
        <dbReference type="Rhea" id="RHEA:30275"/>
        <dbReference type="ChEBI" id="CHEBI:13193"/>
        <dbReference type="ChEBI" id="CHEBI:15377"/>
        <dbReference type="ChEBI" id="CHEBI:16240"/>
        <dbReference type="ChEBI" id="CHEBI:17499"/>
        <dbReference type="EC" id="1.11.1.21"/>
    </reaction>
</comment>
<comment type="catalytic activity">
    <reaction evidence="1">
        <text>2 H2O2 = O2 + 2 H2O</text>
        <dbReference type="Rhea" id="RHEA:20309"/>
        <dbReference type="ChEBI" id="CHEBI:15377"/>
        <dbReference type="ChEBI" id="CHEBI:15379"/>
        <dbReference type="ChEBI" id="CHEBI:16240"/>
        <dbReference type="EC" id="1.11.1.21"/>
    </reaction>
</comment>
<comment type="cofactor">
    <cofactor evidence="1">
        <name>heme b</name>
        <dbReference type="ChEBI" id="CHEBI:60344"/>
    </cofactor>
    <text evidence="1">Binds 1 heme b (iron(II)-protoporphyrin IX) group per dimer.</text>
</comment>
<comment type="subunit">
    <text evidence="1">Homodimer or homotetramer.</text>
</comment>
<comment type="PTM">
    <text evidence="1">Formation of the three residue Trp-Tyr-Met cross-link is important for the catalase, but not the peroxidase activity of the enzyme.</text>
</comment>
<comment type="similarity">
    <text evidence="1">Belongs to the peroxidase family. Peroxidase/catalase subfamily.</text>
</comment>
<dbReference type="EC" id="1.11.1.21" evidence="1"/>
<dbReference type="EMBL" id="CP000774">
    <property type="protein sequence ID" value="ABS63127.1"/>
    <property type="molecule type" value="Genomic_DNA"/>
</dbReference>
<dbReference type="RefSeq" id="WP_012110413.1">
    <property type="nucleotide sequence ID" value="NC_009719.1"/>
</dbReference>
<dbReference type="SMR" id="A7HT94"/>
<dbReference type="STRING" id="402881.Plav_1508"/>
<dbReference type="KEGG" id="pla:Plav_1508"/>
<dbReference type="eggNOG" id="COG0376">
    <property type="taxonomic scope" value="Bacteria"/>
</dbReference>
<dbReference type="HOGENOM" id="CLU_025424_2_0_5"/>
<dbReference type="OrthoDB" id="9759743at2"/>
<dbReference type="Proteomes" id="UP000006377">
    <property type="component" value="Chromosome"/>
</dbReference>
<dbReference type="GO" id="GO:0005829">
    <property type="term" value="C:cytosol"/>
    <property type="evidence" value="ECO:0007669"/>
    <property type="project" value="TreeGrafter"/>
</dbReference>
<dbReference type="GO" id="GO:0004096">
    <property type="term" value="F:catalase activity"/>
    <property type="evidence" value="ECO:0007669"/>
    <property type="project" value="UniProtKB-UniRule"/>
</dbReference>
<dbReference type="GO" id="GO:0020037">
    <property type="term" value="F:heme binding"/>
    <property type="evidence" value="ECO:0007669"/>
    <property type="project" value="InterPro"/>
</dbReference>
<dbReference type="GO" id="GO:0046872">
    <property type="term" value="F:metal ion binding"/>
    <property type="evidence" value="ECO:0007669"/>
    <property type="project" value="UniProtKB-KW"/>
</dbReference>
<dbReference type="GO" id="GO:0070301">
    <property type="term" value="P:cellular response to hydrogen peroxide"/>
    <property type="evidence" value="ECO:0007669"/>
    <property type="project" value="TreeGrafter"/>
</dbReference>
<dbReference type="GO" id="GO:0042744">
    <property type="term" value="P:hydrogen peroxide catabolic process"/>
    <property type="evidence" value="ECO:0007669"/>
    <property type="project" value="UniProtKB-KW"/>
</dbReference>
<dbReference type="CDD" id="cd00649">
    <property type="entry name" value="catalase_peroxidase_1"/>
    <property type="match status" value="1"/>
</dbReference>
<dbReference type="CDD" id="cd08200">
    <property type="entry name" value="catalase_peroxidase_2"/>
    <property type="match status" value="1"/>
</dbReference>
<dbReference type="FunFam" id="1.10.420.10:FF:000004">
    <property type="entry name" value="Catalase-peroxidase"/>
    <property type="match status" value="1"/>
</dbReference>
<dbReference type="FunFam" id="1.10.520.10:FF:000002">
    <property type="entry name" value="Catalase-peroxidase"/>
    <property type="match status" value="1"/>
</dbReference>
<dbReference type="Gene3D" id="1.10.520.10">
    <property type="match status" value="2"/>
</dbReference>
<dbReference type="Gene3D" id="1.10.420.10">
    <property type="entry name" value="Peroxidase, domain 2"/>
    <property type="match status" value="2"/>
</dbReference>
<dbReference type="HAMAP" id="MF_01961">
    <property type="entry name" value="Catal_peroxid"/>
    <property type="match status" value="1"/>
</dbReference>
<dbReference type="InterPro" id="IPR000763">
    <property type="entry name" value="Catalase_peroxidase"/>
</dbReference>
<dbReference type="InterPro" id="IPR002016">
    <property type="entry name" value="Haem_peroxidase"/>
</dbReference>
<dbReference type="InterPro" id="IPR010255">
    <property type="entry name" value="Haem_peroxidase_sf"/>
</dbReference>
<dbReference type="InterPro" id="IPR019794">
    <property type="entry name" value="Peroxidases_AS"/>
</dbReference>
<dbReference type="NCBIfam" id="TIGR00198">
    <property type="entry name" value="cat_per_HPI"/>
    <property type="match status" value="1"/>
</dbReference>
<dbReference type="NCBIfam" id="NF011635">
    <property type="entry name" value="PRK15061.1"/>
    <property type="match status" value="1"/>
</dbReference>
<dbReference type="PANTHER" id="PTHR30555:SF6">
    <property type="entry name" value="CATALASE-PEROXIDASE"/>
    <property type="match status" value="1"/>
</dbReference>
<dbReference type="PANTHER" id="PTHR30555">
    <property type="entry name" value="HYDROPEROXIDASE I, BIFUNCTIONAL CATALASE-PEROXIDASE"/>
    <property type="match status" value="1"/>
</dbReference>
<dbReference type="Pfam" id="PF00141">
    <property type="entry name" value="peroxidase"/>
    <property type="match status" value="2"/>
</dbReference>
<dbReference type="PRINTS" id="PR00460">
    <property type="entry name" value="BPEROXIDASE"/>
</dbReference>
<dbReference type="PRINTS" id="PR00458">
    <property type="entry name" value="PEROXIDASE"/>
</dbReference>
<dbReference type="SUPFAM" id="SSF48113">
    <property type="entry name" value="Heme-dependent peroxidases"/>
    <property type="match status" value="2"/>
</dbReference>
<dbReference type="PROSITE" id="PS00436">
    <property type="entry name" value="PEROXIDASE_2"/>
    <property type="match status" value="1"/>
</dbReference>
<dbReference type="PROSITE" id="PS50873">
    <property type="entry name" value="PEROXIDASE_4"/>
    <property type="match status" value="1"/>
</dbReference>
<sequence>MNTSTSGKCPVMHGSMTTAERSVTEWWPNALNLDILHQHDTKPNPMGKDFDYREELKKLDVAALKKDLQALMTDSQDWWPADWGHYGGLMIRMAWHSAGSYRLFDGRGGGGTGNQRFAPLNSWPDNGNLDKARRLLWPIKKKYGNKLSWADLYILAGNVAYESMGLKTFGFAFGREDIWHPEKDVYWGSEKEWLAESVLRYANEEDPESLEAPLGAVHMGLIYVNPQGRDGKPDPLKSAHDVRVTFKRMAMNDEETAALTAGGHTVGKAHGNGLESNLSAPPEAADIEEQGFGWVNHKTRGVGRDTVTSGLEGAWTSKPTTFDMGYFDMLFGHEWELKKSPAGAWQWQPIDIKEEDMPVDVEDPSIRRMPIMTDADMAMKVDPIYREICERFRKDPEYFKDTFARAWFKLTHRDMGPKVRYVGPEVPAEDLIWQDPIPAGNTSYDVGAVKAKIAASGLSVSELVSTAWDSARTYRGSDMRGGANGARIRLAPQKDWVGNEPERLKKVLSMLEPIAKATGASLADVIVLAGNVGVEQAAKAAGFDIAVPFAPGRGDASAEQTDAESFEALEPLADAYRNFLKRDYELPPEELMLDRTQLMGLTGPEMTVLVGGMRVMGTNHGGTRHGVFTDREGALTNDFFVNLTDMGNSWVKNGGHYDVRDRKTGKTKWTATRVDLVFGSNSILRAYSEVYAQDDAKEKFVKDFVAAWTKVMNADRFDLKK</sequence>
<feature type="chain" id="PRO_0000354854" description="Catalase-peroxidase">
    <location>
        <begin position="1"/>
        <end position="721"/>
    </location>
</feature>
<feature type="active site" description="Proton acceptor" evidence="1">
    <location>
        <position position="96"/>
    </location>
</feature>
<feature type="binding site" description="axial binding residue" evidence="1">
    <location>
        <position position="264"/>
    </location>
    <ligand>
        <name>heme b</name>
        <dbReference type="ChEBI" id="CHEBI:60344"/>
    </ligand>
    <ligandPart>
        <name>Fe</name>
        <dbReference type="ChEBI" id="CHEBI:18248"/>
    </ligandPart>
</feature>
<feature type="site" description="Transition state stabilizer" evidence="1">
    <location>
        <position position="92"/>
    </location>
</feature>
<feature type="cross-link" description="Tryptophyl-tyrosyl-methioninium (Trp-Tyr) (with M-249)" evidence="1">
    <location>
        <begin position="95"/>
        <end position="223"/>
    </location>
</feature>
<feature type="cross-link" description="Tryptophyl-tyrosyl-methioninium (Tyr-Met) (with W-95)" evidence="1">
    <location>
        <begin position="223"/>
        <end position="249"/>
    </location>
</feature>
<protein>
    <recommendedName>
        <fullName evidence="1">Catalase-peroxidase</fullName>
        <shortName evidence="1">CP</shortName>
        <ecNumber evidence="1">1.11.1.21</ecNumber>
    </recommendedName>
    <alternativeName>
        <fullName evidence="1">Peroxidase/catalase</fullName>
    </alternativeName>
</protein>
<keyword id="KW-0349">Heme</keyword>
<keyword id="KW-0376">Hydrogen peroxide</keyword>
<keyword id="KW-0408">Iron</keyword>
<keyword id="KW-0479">Metal-binding</keyword>
<keyword id="KW-0560">Oxidoreductase</keyword>
<keyword id="KW-0575">Peroxidase</keyword>
<keyword id="KW-1185">Reference proteome</keyword>
<gene>
    <name evidence="1" type="primary">katG</name>
    <name type="ordered locus">Plav_1508</name>
</gene>
<organism>
    <name type="scientific">Parvibaculum lavamentivorans (strain DS-1 / DSM 13023 / NCIMB 13966)</name>
    <dbReference type="NCBI Taxonomy" id="402881"/>
    <lineage>
        <taxon>Bacteria</taxon>
        <taxon>Pseudomonadati</taxon>
        <taxon>Pseudomonadota</taxon>
        <taxon>Alphaproteobacteria</taxon>
        <taxon>Hyphomicrobiales</taxon>
        <taxon>Parvibaculaceae</taxon>
        <taxon>Parvibaculum</taxon>
    </lineage>
</organism>
<accession>A7HT94</accession>
<evidence type="ECO:0000255" key="1">
    <source>
        <dbReference type="HAMAP-Rule" id="MF_01961"/>
    </source>
</evidence>
<reference key="1">
    <citation type="journal article" date="2011" name="Stand. Genomic Sci.">
        <title>Complete genome sequence of Parvibaculum lavamentivorans type strain (DS-1(T)).</title>
        <authorList>
            <person name="Schleheck D."/>
            <person name="Weiss M."/>
            <person name="Pitluck S."/>
            <person name="Bruce D."/>
            <person name="Land M.L."/>
            <person name="Han S."/>
            <person name="Saunders E."/>
            <person name="Tapia R."/>
            <person name="Detter C."/>
            <person name="Brettin T."/>
            <person name="Han J."/>
            <person name="Woyke T."/>
            <person name="Goodwin L."/>
            <person name="Pennacchio L."/>
            <person name="Nolan M."/>
            <person name="Cook A.M."/>
            <person name="Kjelleberg S."/>
            <person name="Thomas T."/>
        </authorList>
    </citation>
    <scope>NUCLEOTIDE SEQUENCE [LARGE SCALE GENOMIC DNA]</scope>
    <source>
        <strain>DS-1 / DSM 13023 / NCIMB 13966</strain>
    </source>
</reference>
<proteinExistence type="inferred from homology"/>
<name>KATG_PARL1</name>